<accession>Q8UJ04</accession>
<name>DEOB_AGRFC</name>
<reference key="1">
    <citation type="journal article" date="2001" name="Science">
        <title>The genome of the natural genetic engineer Agrobacterium tumefaciens C58.</title>
        <authorList>
            <person name="Wood D.W."/>
            <person name="Setubal J.C."/>
            <person name="Kaul R."/>
            <person name="Monks D.E."/>
            <person name="Kitajima J.P."/>
            <person name="Okura V.K."/>
            <person name="Zhou Y."/>
            <person name="Chen L."/>
            <person name="Wood G.E."/>
            <person name="Almeida N.F. Jr."/>
            <person name="Woo L."/>
            <person name="Chen Y."/>
            <person name="Paulsen I.T."/>
            <person name="Eisen J.A."/>
            <person name="Karp P.D."/>
            <person name="Bovee D. Sr."/>
            <person name="Chapman P."/>
            <person name="Clendenning J."/>
            <person name="Deatherage G."/>
            <person name="Gillet W."/>
            <person name="Grant C."/>
            <person name="Kutyavin T."/>
            <person name="Levy R."/>
            <person name="Li M.-J."/>
            <person name="McClelland E."/>
            <person name="Palmieri A."/>
            <person name="Raymond C."/>
            <person name="Rouse G."/>
            <person name="Saenphimmachak C."/>
            <person name="Wu Z."/>
            <person name="Romero P."/>
            <person name="Gordon D."/>
            <person name="Zhang S."/>
            <person name="Yoo H."/>
            <person name="Tao Y."/>
            <person name="Biddle P."/>
            <person name="Jung M."/>
            <person name="Krespan W."/>
            <person name="Perry M."/>
            <person name="Gordon-Kamm B."/>
            <person name="Liao L."/>
            <person name="Kim S."/>
            <person name="Hendrick C."/>
            <person name="Zhao Z.-Y."/>
            <person name="Dolan M."/>
            <person name="Chumley F."/>
            <person name="Tingey S.V."/>
            <person name="Tomb J.-F."/>
            <person name="Gordon M.P."/>
            <person name="Olson M.V."/>
            <person name="Nester E.W."/>
        </authorList>
    </citation>
    <scope>NUCLEOTIDE SEQUENCE [LARGE SCALE GENOMIC DNA]</scope>
    <source>
        <strain>C58 / ATCC 33970</strain>
    </source>
</reference>
<reference key="2">
    <citation type="journal article" date="2001" name="Science">
        <title>Genome sequence of the plant pathogen and biotechnology agent Agrobacterium tumefaciens C58.</title>
        <authorList>
            <person name="Goodner B."/>
            <person name="Hinkle G."/>
            <person name="Gattung S."/>
            <person name="Miller N."/>
            <person name="Blanchard M."/>
            <person name="Qurollo B."/>
            <person name="Goldman B.S."/>
            <person name="Cao Y."/>
            <person name="Askenazi M."/>
            <person name="Halling C."/>
            <person name="Mullin L."/>
            <person name="Houmiel K."/>
            <person name="Gordon J."/>
            <person name="Vaudin M."/>
            <person name="Iartchouk O."/>
            <person name="Epp A."/>
            <person name="Liu F."/>
            <person name="Wollam C."/>
            <person name="Allinger M."/>
            <person name="Doughty D."/>
            <person name="Scott C."/>
            <person name="Lappas C."/>
            <person name="Markelz B."/>
            <person name="Flanagan C."/>
            <person name="Crowell C."/>
            <person name="Gurson J."/>
            <person name="Lomo C."/>
            <person name="Sear C."/>
            <person name="Strub G."/>
            <person name="Cielo C."/>
            <person name="Slater S."/>
        </authorList>
    </citation>
    <scope>NUCLEOTIDE SEQUENCE [LARGE SCALE GENOMIC DNA]</scope>
    <source>
        <strain>C58 / ATCC 33970</strain>
    </source>
</reference>
<evidence type="ECO:0000255" key="1">
    <source>
        <dbReference type="HAMAP-Rule" id="MF_00740"/>
    </source>
</evidence>
<organism>
    <name type="scientific">Agrobacterium fabrum (strain C58 / ATCC 33970)</name>
    <name type="common">Agrobacterium tumefaciens (strain C58)</name>
    <dbReference type="NCBI Taxonomy" id="176299"/>
    <lineage>
        <taxon>Bacteria</taxon>
        <taxon>Pseudomonadati</taxon>
        <taxon>Pseudomonadota</taxon>
        <taxon>Alphaproteobacteria</taxon>
        <taxon>Hyphomicrobiales</taxon>
        <taxon>Rhizobiaceae</taxon>
        <taxon>Rhizobium/Agrobacterium group</taxon>
        <taxon>Agrobacterium</taxon>
        <taxon>Agrobacterium tumefaciens complex</taxon>
    </lineage>
</organism>
<protein>
    <recommendedName>
        <fullName evidence="1">Phosphopentomutase</fullName>
        <ecNumber evidence="1">5.4.2.7</ecNumber>
    </recommendedName>
    <alternativeName>
        <fullName evidence="1">Phosphodeoxyribomutase</fullName>
    </alternativeName>
</protein>
<gene>
    <name evidence="1" type="primary">deoB</name>
    <name type="synonym">drm</name>
    <name type="ordered locus">Atu0137</name>
    <name type="ORF">AGR_C_219</name>
</gene>
<keyword id="KW-0963">Cytoplasm</keyword>
<keyword id="KW-0413">Isomerase</keyword>
<keyword id="KW-0464">Manganese</keyword>
<keyword id="KW-0479">Metal-binding</keyword>
<keyword id="KW-1185">Reference proteome</keyword>
<dbReference type="EC" id="5.4.2.7" evidence="1"/>
<dbReference type="EMBL" id="AE007869">
    <property type="protein sequence ID" value="AAK85958.1"/>
    <property type="molecule type" value="Genomic_DNA"/>
</dbReference>
<dbReference type="PIR" id="AC2593">
    <property type="entry name" value="AC2593"/>
</dbReference>
<dbReference type="PIR" id="E97375">
    <property type="entry name" value="E97375"/>
</dbReference>
<dbReference type="RefSeq" id="NP_353173.1">
    <property type="nucleotide sequence ID" value="NC_003062.2"/>
</dbReference>
<dbReference type="RefSeq" id="WP_006309960.1">
    <property type="nucleotide sequence ID" value="NC_003062.2"/>
</dbReference>
<dbReference type="SMR" id="Q8UJ04"/>
<dbReference type="STRING" id="176299.Atu0137"/>
<dbReference type="EnsemblBacteria" id="AAK85958">
    <property type="protein sequence ID" value="AAK85958"/>
    <property type="gene ID" value="Atu0137"/>
</dbReference>
<dbReference type="GeneID" id="1132175"/>
<dbReference type="KEGG" id="atu:Atu0137"/>
<dbReference type="PATRIC" id="fig|176299.10.peg.128"/>
<dbReference type="eggNOG" id="COG1015">
    <property type="taxonomic scope" value="Bacteria"/>
</dbReference>
<dbReference type="HOGENOM" id="CLU_053861_0_0_5"/>
<dbReference type="OrthoDB" id="9769930at2"/>
<dbReference type="PhylomeDB" id="Q8UJ04"/>
<dbReference type="BioCyc" id="AGRO:ATU0137-MONOMER"/>
<dbReference type="UniPathway" id="UPA00002">
    <property type="reaction ID" value="UER00467"/>
</dbReference>
<dbReference type="Proteomes" id="UP000000813">
    <property type="component" value="Chromosome circular"/>
</dbReference>
<dbReference type="GO" id="GO:0005829">
    <property type="term" value="C:cytosol"/>
    <property type="evidence" value="ECO:0007669"/>
    <property type="project" value="TreeGrafter"/>
</dbReference>
<dbReference type="GO" id="GO:0000287">
    <property type="term" value="F:magnesium ion binding"/>
    <property type="evidence" value="ECO:0007669"/>
    <property type="project" value="InterPro"/>
</dbReference>
<dbReference type="GO" id="GO:0030145">
    <property type="term" value="F:manganese ion binding"/>
    <property type="evidence" value="ECO:0007669"/>
    <property type="project" value="UniProtKB-UniRule"/>
</dbReference>
<dbReference type="GO" id="GO:0008973">
    <property type="term" value="F:phosphopentomutase activity"/>
    <property type="evidence" value="ECO:0007669"/>
    <property type="project" value="UniProtKB-UniRule"/>
</dbReference>
<dbReference type="GO" id="GO:0006018">
    <property type="term" value="P:2-deoxyribose 1-phosphate catabolic process"/>
    <property type="evidence" value="ECO:0007669"/>
    <property type="project" value="UniProtKB-UniRule"/>
</dbReference>
<dbReference type="GO" id="GO:0006015">
    <property type="term" value="P:5-phosphoribose 1-diphosphate biosynthetic process"/>
    <property type="evidence" value="ECO:0007669"/>
    <property type="project" value="UniProtKB-UniPathway"/>
</dbReference>
<dbReference type="GO" id="GO:0043094">
    <property type="term" value="P:metabolic compound salvage"/>
    <property type="evidence" value="ECO:0007669"/>
    <property type="project" value="InterPro"/>
</dbReference>
<dbReference type="GO" id="GO:0009117">
    <property type="term" value="P:nucleotide metabolic process"/>
    <property type="evidence" value="ECO:0007669"/>
    <property type="project" value="InterPro"/>
</dbReference>
<dbReference type="CDD" id="cd16009">
    <property type="entry name" value="PPM"/>
    <property type="match status" value="1"/>
</dbReference>
<dbReference type="Gene3D" id="3.40.720.10">
    <property type="entry name" value="Alkaline Phosphatase, subunit A"/>
    <property type="match status" value="1"/>
</dbReference>
<dbReference type="Gene3D" id="3.30.70.1250">
    <property type="entry name" value="Phosphopentomutase"/>
    <property type="match status" value="1"/>
</dbReference>
<dbReference type="HAMAP" id="MF_00740">
    <property type="entry name" value="Phosphopentomut"/>
    <property type="match status" value="1"/>
</dbReference>
<dbReference type="InterPro" id="IPR017850">
    <property type="entry name" value="Alkaline_phosphatase_core_sf"/>
</dbReference>
<dbReference type="InterPro" id="IPR010045">
    <property type="entry name" value="DeoB"/>
</dbReference>
<dbReference type="InterPro" id="IPR006124">
    <property type="entry name" value="Metalloenzyme"/>
</dbReference>
<dbReference type="InterPro" id="IPR024052">
    <property type="entry name" value="Phosphopentomutase_DeoB_cap_sf"/>
</dbReference>
<dbReference type="NCBIfam" id="TIGR01696">
    <property type="entry name" value="deoB"/>
    <property type="match status" value="1"/>
</dbReference>
<dbReference type="NCBIfam" id="NF003766">
    <property type="entry name" value="PRK05362.1"/>
    <property type="match status" value="1"/>
</dbReference>
<dbReference type="PANTHER" id="PTHR21110">
    <property type="entry name" value="PHOSPHOPENTOMUTASE"/>
    <property type="match status" value="1"/>
</dbReference>
<dbReference type="PANTHER" id="PTHR21110:SF0">
    <property type="entry name" value="PHOSPHOPENTOMUTASE"/>
    <property type="match status" value="1"/>
</dbReference>
<dbReference type="Pfam" id="PF01676">
    <property type="entry name" value="Metalloenzyme"/>
    <property type="match status" value="1"/>
</dbReference>
<dbReference type="PIRSF" id="PIRSF001491">
    <property type="entry name" value="Ppentomutase"/>
    <property type="match status" value="1"/>
</dbReference>
<dbReference type="SUPFAM" id="SSF53649">
    <property type="entry name" value="Alkaline phosphatase-like"/>
    <property type="match status" value="1"/>
</dbReference>
<dbReference type="SUPFAM" id="SSF143856">
    <property type="entry name" value="DeoB insert domain-like"/>
    <property type="match status" value="1"/>
</dbReference>
<feature type="chain" id="PRO_0000199805" description="Phosphopentomutase">
    <location>
        <begin position="1"/>
        <end position="406"/>
    </location>
</feature>
<feature type="binding site" evidence="1">
    <location>
        <position position="10"/>
    </location>
    <ligand>
        <name>Mn(2+)</name>
        <dbReference type="ChEBI" id="CHEBI:29035"/>
        <label>1</label>
    </ligand>
</feature>
<feature type="binding site" evidence="1">
    <location>
        <position position="305"/>
    </location>
    <ligand>
        <name>Mn(2+)</name>
        <dbReference type="ChEBI" id="CHEBI:29035"/>
        <label>2</label>
    </ligand>
</feature>
<feature type="binding site" evidence="1">
    <location>
        <position position="310"/>
    </location>
    <ligand>
        <name>Mn(2+)</name>
        <dbReference type="ChEBI" id="CHEBI:29035"/>
        <label>2</label>
    </ligand>
</feature>
<feature type="binding site" evidence="1">
    <location>
        <position position="346"/>
    </location>
    <ligand>
        <name>Mn(2+)</name>
        <dbReference type="ChEBI" id="CHEBI:29035"/>
        <label>1</label>
    </ligand>
</feature>
<feature type="binding site" evidence="1">
    <location>
        <position position="347"/>
    </location>
    <ligand>
        <name>Mn(2+)</name>
        <dbReference type="ChEBI" id="CHEBI:29035"/>
        <label>1</label>
    </ligand>
</feature>
<feature type="binding site" evidence="1">
    <location>
        <position position="358"/>
    </location>
    <ligand>
        <name>Mn(2+)</name>
        <dbReference type="ChEBI" id="CHEBI:29035"/>
        <label>2</label>
    </ligand>
</feature>
<comment type="function">
    <text evidence="1">Isomerase that catalyzes the conversion of deoxy-ribose 1-phosphate (dRib-1-P) and ribose 1-phosphate (Rib-1-P) to deoxy-ribose 5-phosphate (dRib-5-P) and ribose 5-phosphate (Rib-5-P), respectively.</text>
</comment>
<comment type="catalytic activity">
    <reaction evidence="1">
        <text>2-deoxy-alpha-D-ribose 1-phosphate = 2-deoxy-D-ribose 5-phosphate</text>
        <dbReference type="Rhea" id="RHEA:27658"/>
        <dbReference type="ChEBI" id="CHEBI:57259"/>
        <dbReference type="ChEBI" id="CHEBI:62877"/>
        <dbReference type="EC" id="5.4.2.7"/>
    </reaction>
</comment>
<comment type="catalytic activity">
    <reaction evidence="1">
        <text>alpha-D-ribose 1-phosphate = D-ribose 5-phosphate</text>
        <dbReference type="Rhea" id="RHEA:18793"/>
        <dbReference type="ChEBI" id="CHEBI:57720"/>
        <dbReference type="ChEBI" id="CHEBI:78346"/>
        <dbReference type="EC" id="5.4.2.7"/>
    </reaction>
</comment>
<comment type="cofactor">
    <cofactor evidence="1">
        <name>Mn(2+)</name>
        <dbReference type="ChEBI" id="CHEBI:29035"/>
    </cofactor>
    <text evidence="1">Binds 2 manganese ions.</text>
</comment>
<comment type="pathway">
    <text evidence="1">Carbohydrate degradation; 2-deoxy-D-ribose 1-phosphate degradation; D-glyceraldehyde 3-phosphate and acetaldehyde from 2-deoxy-alpha-D-ribose 1-phosphate: step 1/2.</text>
</comment>
<comment type="subcellular location">
    <subcellularLocation>
        <location evidence="1">Cytoplasm</location>
    </subcellularLocation>
</comment>
<comment type="similarity">
    <text evidence="1">Belongs to the phosphopentomutase family.</text>
</comment>
<proteinExistence type="inferred from homology"/>
<sequence length="406" mass="43457">MARAFLLVLDSFGVGGAPDAERYGDLGANTLGHIAEFCAAGAADRAGLRAGPLKLPNMCSLGLLEIARQASGDIPAGMEPPERIFGLHGSASEISKGKDTPSGHWEIAGTPVTFDWGYFPTEGDAFSPELVEAICRQADIPGILGNCHASGTEIIAALGEEHIRSGKPICYTSSDSVFQIAAHETHFGLDRLIALCETVRKLLDPLNIGRVIARPFIGETVATFERTGNRRDFSVPPPEPTLLDRLVEAGRKVHAIGKIGDIYAHQGVTRVIKANGNAALMDATLHAIDEAENGDLVFTNFVDFDMLYGHRRDVAGYAAALEAFDARIPEIHRKMAPGDIALLTADHGCDPTWRGTDHTRERVPIMAFGPGIRSRDVGIRSSYADIGESIAHHLGIEAGSHGRSFI</sequence>